<organism>
    <name type="scientific">Sorghum bicolor</name>
    <name type="common">Sorghum</name>
    <name type="synonym">Sorghum vulgare</name>
    <dbReference type="NCBI Taxonomy" id="4558"/>
    <lineage>
        <taxon>Eukaryota</taxon>
        <taxon>Viridiplantae</taxon>
        <taxon>Streptophyta</taxon>
        <taxon>Embryophyta</taxon>
        <taxon>Tracheophyta</taxon>
        <taxon>Spermatophyta</taxon>
        <taxon>Magnoliopsida</taxon>
        <taxon>Liliopsida</taxon>
        <taxon>Poales</taxon>
        <taxon>Poaceae</taxon>
        <taxon>PACMAD clade</taxon>
        <taxon>Panicoideae</taxon>
        <taxon>Andropogonodae</taxon>
        <taxon>Andropogoneae</taxon>
        <taxon>Sorghinae</taxon>
        <taxon>Sorghum</taxon>
    </lineage>
</organism>
<dbReference type="EC" id="2.3.1.74"/>
<dbReference type="EMBL" id="AF152553">
    <property type="protein sequence ID" value="AAD41878.1"/>
    <property type="molecule type" value="Genomic_DNA"/>
</dbReference>
<dbReference type="RefSeq" id="XP_002450877.1">
    <property type="nucleotide sequence ID" value="XM_002450832.1"/>
</dbReference>
<dbReference type="SMR" id="Q9SBL3"/>
<dbReference type="EnsemblPlants" id="EES09865">
    <property type="protein sequence ID" value="EES09865"/>
    <property type="gene ID" value="SORBI_3005G137300"/>
</dbReference>
<dbReference type="GeneID" id="8064820"/>
<dbReference type="Gramene" id="EES09865">
    <property type="protein sequence ID" value="EES09865"/>
    <property type="gene ID" value="SORBI_3005G137300"/>
</dbReference>
<dbReference type="KEGG" id="sbi:8064820"/>
<dbReference type="eggNOG" id="ENOG502QRSY">
    <property type="taxonomic scope" value="Eukaryota"/>
</dbReference>
<dbReference type="HOGENOM" id="CLU_034992_2_0_1"/>
<dbReference type="OMA" id="TAWLINE"/>
<dbReference type="OrthoDB" id="1529441at2759"/>
<dbReference type="UniPathway" id="UPA00154"/>
<dbReference type="ExpressionAtlas" id="Q9SBL3">
    <property type="expression patterns" value="baseline and differential"/>
</dbReference>
<dbReference type="GO" id="GO:0016210">
    <property type="term" value="F:naringenin-chalcone synthase activity"/>
    <property type="evidence" value="ECO:0007669"/>
    <property type="project" value="UniProtKB-EC"/>
</dbReference>
<dbReference type="GO" id="GO:0009813">
    <property type="term" value="P:flavonoid biosynthetic process"/>
    <property type="evidence" value="ECO:0007669"/>
    <property type="project" value="UniProtKB-UniPathway"/>
</dbReference>
<dbReference type="CDD" id="cd00831">
    <property type="entry name" value="CHS_like"/>
    <property type="match status" value="1"/>
</dbReference>
<dbReference type="FunFam" id="3.40.47.10:FF:000014">
    <property type="entry name" value="Chalcone synthase 1"/>
    <property type="match status" value="1"/>
</dbReference>
<dbReference type="FunFam" id="3.40.47.10:FF:000025">
    <property type="entry name" value="Chalcone synthase 2"/>
    <property type="match status" value="1"/>
</dbReference>
<dbReference type="Gene3D" id="3.40.47.10">
    <property type="match status" value="2"/>
</dbReference>
<dbReference type="InterPro" id="IPR012328">
    <property type="entry name" value="Chalcone/stilbene_synt_C"/>
</dbReference>
<dbReference type="InterPro" id="IPR001099">
    <property type="entry name" value="Chalcone/stilbene_synt_N"/>
</dbReference>
<dbReference type="InterPro" id="IPR018088">
    <property type="entry name" value="Chalcone/stilbene_synthase_AS"/>
</dbReference>
<dbReference type="InterPro" id="IPR011141">
    <property type="entry name" value="Polyketide_synthase_type-III"/>
</dbReference>
<dbReference type="InterPro" id="IPR016039">
    <property type="entry name" value="Thiolase-like"/>
</dbReference>
<dbReference type="PANTHER" id="PTHR11877:SF14">
    <property type="entry name" value="CHALCONE SYNTHASE"/>
    <property type="match status" value="1"/>
</dbReference>
<dbReference type="PANTHER" id="PTHR11877">
    <property type="entry name" value="HYDROXYMETHYLGLUTARYL-COA SYNTHASE"/>
    <property type="match status" value="1"/>
</dbReference>
<dbReference type="Pfam" id="PF02797">
    <property type="entry name" value="Chal_sti_synt_C"/>
    <property type="match status" value="1"/>
</dbReference>
<dbReference type="Pfam" id="PF00195">
    <property type="entry name" value="Chal_sti_synt_N"/>
    <property type="match status" value="1"/>
</dbReference>
<dbReference type="PIRSF" id="PIRSF000451">
    <property type="entry name" value="PKS_III"/>
    <property type="match status" value="1"/>
</dbReference>
<dbReference type="SUPFAM" id="SSF53901">
    <property type="entry name" value="Thiolase-like"/>
    <property type="match status" value="2"/>
</dbReference>
<dbReference type="PROSITE" id="PS00441">
    <property type="entry name" value="CHALCONE_SYNTH"/>
    <property type="match status" value="1"/>
</dbReference>
<gene>
    <name type="primary">CHS6</name>
</gene>
<comment type="function">
    <text>The primary product of this enzyme is 4,2',4',6'-tetrahydroxychalcone (also termed naringenin-chalcone or chalcone) which can under specific conditions spontaneously isomerize into naringenin.</text>
</comment>
<comment type="catalytic activity">
    <reaction evidence="1">
        <text>(E)-4-coumaroyl-CoA + 3 malonyl-CoA + 3 H(+) = 2',4,4',6'-tetrahydroxychalcone + 3 CO2 + 4 CoA</text>
        <dbReference type="Rhea" id="RHEA:11128"/>
        <dbReference type="ChEBI" id="CHEBI:15378"/>
        <dbReference type="ChEBI" id="CHEBI:15413"/>
        <dbReference type="ChEBI" id="CHEBI:16526"/>
        <dbReference type="ChEBI" id="CHEBI:57287"/>
        <dbReference type="ChEBI" id="CHEBI:57384"/>
        <dbReference type="ChEBI" id="CHEBI:85008"/>
        <dbReference type="EC" id="2.3.1.74"/>
    </reaction>
</comment>
<comment type="pathway">
    <text>Secondary metabolite biosynthesis; flavonoid biosynthesis.</text>
</comment>
<comment type="similarity">
    <text evidence="2">Belongs to the thiolase-like superfamily. Chalcone/stilbene synthases family.</text>
</comment>
<sequence>MAGATVTVEEVRKAQRATGPATVLAIGTATPANCVHQADYPDYYFRITKSEHMTELKEKFKRMCDKSQIRKRYMHLTEEYLAENPNMCAYMAPSLDARQDIVVVEVPKLGKAAAQKAIKEWGQPKSKITHLVFCTTSGVDMPGADYQLTKMLGLRPSVNRLMMYQQGCFAGGTVLRVAKDLAENNRGARVLVVCSEITAVTFRGPSESHLDSMVGQALFGDGAAAVIVGADPDERVERPLFQLVSASQTILPDSEGAIDGHLREVGLTFHLLKDVPGLISKNIERSLEEAFKPLGITDYNSIFWVAHPGGPAILDQVEAKVGLKKERMRATRHVLSEYGNMSSACVLFILDEMRKRSAEDGQATTGEGFDWGVLFGFGPGLTVETVVLHSVPITTGATITA</sequence>
<name>CHS6_SORBI</name>
<accession>Q9SBL3</accession>
<evidence type="ECO:0000255" key="1">
    <source>
        <dbReference type="PROSITE-ProRule" id="PRU10023"/>
    </source>
</evidence>
<evidence type="ECO:0000305" key="2"/>
<feature type="chain" id="PRO_0000216060" description="Chalcone synthase 6">
    <location>
        <begin position="1"/>
        <end position="401"/>
    </location>
</feature>
<feature type="active site" evidence="1">
    <location>
        <position position="168"/>
    </location>
</feature>
<reference key="1">
    <citation type="submission" date="1999-05" db="EMBL/GenBank/DDBJ databases">
        <title>Molecular cloning of chalcone synthase genes from sorghum.</title>
        <authorList>
            <person name="Lo S.-C.C."/>
            <person name="Nicholson R.L."/>
        </authorList>
    </citation>
    <scope>NUCLEOTIDE SEQUENCE [GENOMIC DNA]</scope>
    <source>
        <strain>cv. BTx623</strain>
    </source>
</reference>
<keyword id="KW-0012">Acyltransferase</keyword>
<keyword id="KW-0284">Flavonoid biosynthesis</keyword>
<keyword id="KW-0808">Transferase</keyword>
<protein>
    <recommendedName>
        <fullName>Chalcone synthase 6</fullName>
        <ecNumber>2.3.1.74</ecNumber>
    </recommendedName>
    <alternativeName>
        <fullName>Naringenin-chalcone synthase 6</fullName>
    </alternativeName>
</protein>
<proteinExistence type="inferred from homology"/>